<organism>
    <name type="scientific">Homo sapiens</name>
    <name type="common">Human</name>
    <dbReference type="NCBI Taxonomy" id="9606"/>
    <lineage>
        <taxon>Eukaryota</taxon>
        <taxon>Metazoa</taxon>
        <taxon>Chordata</taxon>
        <taxon>Craniata</taxon>
        <taxon>Vertebrata</taxon>
        <taxon>Euteleostomi</taxon>
        <taxon>Mammalia</taxon>
        <taxon>Eutheria</taxon>
        <taxon>Euarchontoglires</taxon>
        <taxon>Primates</taxon>
        <taxon>Haplorrhini</taxon>
        <taxon>Catarrhini</taxon>
        <taxon>Hominidae</taxon>
        <taxon>Homo</taxon>
    </lineage>
</organism>
<feature type="chain" id="PRO_0000316983" description="Xin actin-binding repeat-containing protein 1">
    <location>
        <begin position="1"/>
        <end position="1843"/>
    </location>
</feature>
<feature type="repeat" description="Xin 1">
    <location>
        <begin position="89"/>
        <end position="104"/>
    </location>
</feature>
<feature type="repeat" description="Xin 2">
    <location>
        <begin position="121"/>
        <end position="136"/>
    </location>
</feature>
<feature type="repeat" description="Xin 3">
    <location>
        <begin position="151"/>
        <end position="166"/>
    </location>
</feature>
<feature type="repeat" description="Xin 4">
    <location>
        <begin position="186"/>
        <end position="201"/>
    </location>
</feature>
<feature type="repeat" description="Xin 5">
    <location>
        <begin position="226"/>
        <end position="241"/>
    </location>
</feature>
<feature type="repeat" description="Xin 6">
    <location>
        <begin position="264"/>
        <end position="279"/>
    </location>
</feature>
<feature type="repeat" description="Xin 7">
    <location>
        <begin position="302"/>
        <end position="317"/>
    </location>
</feature>
<feature type="repeat" description="Xin 8">
    <location>
        <begin position="340"/>
        <end position="355"/>
    </location>
</feature>
<feature type="repeat" description="Xin 9">
    <location>
        <begin position="376"/>
        <end position="391"/>
    </location>
</feature>
<feature type="repeat" description="Xin 10">
    <location>
        <begin position="436"/>
        <end position="451"/>
    </location>
</feature>
<feature type="repeat" description="Xin 11">
    <location>
        <begin position="507"/>
        <end position="522"/>
    </location>
</feature>
<feature type="repeat" description="Xin 12">
    <location>
        <begin position="545"/>
        <end position="560"/>
    </location>
</feature>
<feature type="repeat" description="Xin 13">
    <location>
        <begin position="589"/>
        <end position="604"/>
    </location>
</feature>
<feature type="repeat" description="Xin 14">
    <location>
        <begin position="621"/>
        <end position="636"/>
    </location>
</feature>
<feature type="repeat" description="Xin 15">
    <location>
        <begin position="654"/>
        <end position="669"/>
    </location>
</feature>
<feature type="repeat" description="Xin 16">
    <location>
        <begin position="691"/>
        <end position="706"/>
    </location>
</feature>
<feature type="repeat" description="Xin 17">
    <location>
        <begin position="723"/>
        <end position="738"/>
    </location>
</feature>
<feature type="region of interest" description="Interaction with VASP" evidence="9">
    <location>
        <begin position="1"/>
        <end position="54"/>
    </location>
</feature>
<feature type="region of interest" description="Disordered" evidence="6">
    <location>
        <begin position="1"/>
        <end position="48"/>
    </location>
</feature>
<feature type="region of interest" description="Disordered" evidence="6">
    <location>
        <begin position="132"/>
        <end position="151"/>
    </location>
</feature>
<feature type="region of interest" description="Disordered" evidence="6">
    <location>
        <begin position="406"/>
        <end position="432"/>
    </location>
</feature>
<feature type="region of interest" description="Disordered" evidence="6">
    <location>
        <begin position="455"/>
        <end position="479"/>
    </location>
</feature>
<feature type="region of interest" description="Interaction with CTNNB1" evidence="1">
    <location>
        <begin position="531"/>
        <end position="632"/>
    </location>
</feature>
<feature type="region of interest" description="Disordered" evidence="6">
    <location>
        <begin position="564"/>
        <end position="591"/>
    </location>
</feature>
<feature type="region of interest" description="Disordered" evidence="6">
    <location>
        <begin position="943"/>
        <end position="999"/>
    </location>
</feature>
<feature type="region of interest" description="Disordered" evidence="6">
    <location>
        <begin position="1063"/>
        <end position="1205"/>
    </location>
</feature>
<feature type="region of interest" description="Disordered" evidence="6">
    <location>
        <begin position="1238"/>
        <end position="1277"/>
    </location>
</feature>
<feature type="region of interest" description="Disordered" evidence="6">
    <location>
        <begin position="1289"/>
        <end position="1471"/>
    </location>
</feature>
<feature type="region of interest" description="Disordered" evidence="6">
    <location>
        <begin position="1561"/>
        <end position="1696"/>
    </location>
</feature>
<feature type="region of interest" description="Interaction with FLNC" evidence="9">
    <location>
        <begin position="1685"/>
        <end position="1843"/>
    </location>
</feature>
<feature type="coiled-coil region" evidence="4">
    <location>
        <begin position="1462"/>
        <end position="1490"/>
    </location>
</feature>
<feature type="compositionally biased region" description="Polar residues" evidence="6">
    <location>
        <begin position="1"/>
        <end position="10"/>
    </location>
</feature>
<feature type="compositionally biased region" description="Pro residues" evidence="6">
    <location>
        <begin position="23"/>
        <end position="39"/>
    </location>
</feature>
<feature type="compositionally biased region" description="Low complexity" evidence="6">
    <location>
        <begin position="415"/>
        <end position="429"/>
    </location>
</feature>
<feature type="compositionally biased region" description="Basic and acidic residues" evidence="6">
    <location>
        <begin position="564"/>
        <end position="577"/>
    </location>
</feature>
<feature type="compositionally biased region" description="Polar residues" evidence="6">
    <location>
        <begin position="1064"/>
        <end position="1073"/>
    </location>
</feature>
<feature type="compositionally biased region" description="Polar residues" evidence="6">
    <location>
        <begin position="1080"/>
        <end position="1089"/>
    </location>
</feature>
<feature type="compositionally biased region" description="Polar residues" evidence="6">
    <location>
        <begin position="1294"/>
        <end position="1311"/>
    </location>
</feature>
<feature type="compositionally biased region" description="Basic and acidic residues" evidence="6">
    <location>
        <begin position="1357"/>
        <end position="1368"/>
    </location>
</feature>
<feature type="compositionally biased region" description="Polar residues" evidence="6">
    <location>
        <begin position="1393"/>
        <end position="1424"/>
    </location>
</feature>
<feature type="compositionally biased region" description="Polar residues" evidence="6">
    <location>
        <begin position="1588"/>
        <end position="1600"/>
    </location>
</feature>
<feature type="compositionally biased region" description="Polar residues" evidence="6">
    <location>
        <begin position="1663"/>
        <end position="1679"/>
    </location>
</feature>
<feature type="modified residue" description="Phosphoserine" evidence="2">
    <location>
        <position position="205"/>
    </location>
</feature>
<feature type="modified residue" description="Phosphoserine" evidence="2">
    <location>
        <position position="208"/>
    </location>
</feature>
<feature type="modified residue" description="Phosphoserine" evidence="2">
    <location>
        <position position="213"/>
    </location>
</feature>
<feature type="modified residue" description="Phosphoserine" evidence="20">
    <location>
        <position position="295"/>
    </location>
</feature>
<feature type="modified residue" description="Phosphoserine" evidence="2">
    <location>
        <position position="332"/>
    </location>
</feature>
<feature type="splice variant" id="VSP_030843" description="In isoform C." evidence="13 15">
    <location>
        <begin position="1"/>
        <end position="1317"/>
    </location>
</feature>
<feature type="splice variant" id="VSP_030844" description="In isoform B." evidence="14 17">
    <original>VS</original>
    <variation>LL</variation>
    <location>
        <begin position="1120"/>
        <end position="1121"/>
    </location>
</feature>
<feature type="splice variant" id="VSP_030845" description="In isoform B." evidence="14 17">
    <location>
        <begin position="1122"/>
        <end position="1843"/>
    </location>
</feature>
<feature type="sequence variant" id="VAR_038439" description="In dbSNP:rs2271488.">
    <original>D</original>
    <variation>N</variation>
    <location>
        <position position="3"/>
    </location>
</feature>
<feature type="sequence variant" id="VAR_038440" description="In dbSNP:rs6805248." evidence="11">
    <original>Q</original>
    <variation>R</variation>
    <location>
        <position position="346"/>
    </location>
</feature>
<feature type="sequence variant" id="VAR_038441" description="In dbSNP:rs34121641.">
    <original>R</original>
    <variation>Q</variation>
    <location>
        <position position="551"/>
    </location>
</feature>
<feature type="sequence variant" id="VAR_061722" description="In dbSNP:rs60540208.">
    <original>R</original>
    <variation>C</variation>
    <location>
        <position position="695"/>
    </location>
</feature>
<feature type="sequence variant" id="VAR_061723" description="In dbSNP:rs9823779.">
    <original>R</original>
    <variation>W</variation>
    <location>
        <position position="776"/>
    </location>
</feature>
<feature type="sequence variant" id="VAR_038442" description="In a breast cancer sample; somatic mutation." evidence="10">
    <original>L</original>
    <variation>H</variation>
    <location>
        <position position="929"/>
    </location>
</feature>
<feature type="sequence variant" id="VAR_038443" description="In dbSNP:rs11711871.">
    <original>H</original>
    <variation>P</variation>
    <location>
        <position position="965"/>
    </location>
</feature>
<feature type="sequence variant" id="VAR_038444" description="In dbSNP:rs35649793.">
    <original>P</original>
    <variation>A</variation>
    <location>
        <position position="1046"/>
    </location>
</feature>
<feature type="sequence variant" id="VAR_061724" description="In dbSNP:rs35795536.">
    <original>A</original>
    <variation>V</variation>
    <location>
        <position position="1061"/>
    </location>
</feature>
<feature type="sequence variant" id="VAR_038445" description="In dbSNP:rs3732383." evidence="8">
    <original>G</original>
    <variation>R</variation>
    <location>
        <position position="1604"/>
    </location>
</feature>
<feature type="sequence variant" id="VAR_038446" description="In dbSNP:rs34810344.">
    <original>A</original>
    <variation>V</variation>
    <location>
        <position position="1608"/>
    </location>
</feature>
<feature type="sequence variant" id="VAR_038447" description="In a breast cancer sample; somatic mutation; dbSNP:rs768911526." evidence="10">
    <original>R</original>
    <variation>K</variation>
    <location>
        <position position="1634"/>
    </location>
</feature>
<feature type="sequence variant" id="VAR_061725" description="In dbSNP:rs34053674.">
    <original>Q</original>
    <variation>H</variation>
    <location>
        <position position="1707"/>
    </location>
</feature>
<feature type="sequence variant" id="VAR_038448" description="In dbSNP:rs9827576.">
    <original>I</original>
    <variation>V</variation>
    <location>
        <position position="1724"/>
    </location>
</feature>
<feature type="sequence conflict" description="In Ref. 5; CAH18268." evidence="18" ref="5">
    <original>D</original>
    <variation>G</variation>
    <location>
        <position position="21"/>
    </location>
</feature>
<feature type="sequence conflict" description="In Ref. 5; CAH18268." evidence="18" ref="5">
    <original>I</original>
    <variation>T</variation>
    <location>
        <position position="106"/>
    </location>
</feature>
<feature type="sequence conflict" description="In Ref. 5; CAH18268." evidence="18" ref="5">
    <original>E</original>
    <variation>G</variation>
    <location>
        <position position="274"/>
    </location>
</feature>
<feature type="sequence conflict" description="In Ref. 5; CAH18268." evidence="18" ref="5">
    <original>Q</original>
    <variation>P</variation>
    <location>
        <position position="754"/>
    </location>
</feature>
<feature type="sequence conflict" description="In Ref. 5; CAH18268." evidence="18" ref="5">
    <original>G</original>
    <variation>R</variation>
    <location>
        <position position="813"/>
    </location>
</feature>
<feature type="sequence conflict" description="In Ref. 4; BAC04783." evidence="18" ref="4">
    <original>K</original>
    <variation>R</variation>
    <location>
        <position position="1556"/>
    </location>
</feature>
<reference key="1">
    <citation type="journal article" date="2004" name="J. Cell Sci.">
        <title>Xin repeats define a novel actin-binding motif.</title>
        <authorList>
            <person name="Pacholsky D."/>
            <person name="Vakeel P."/>
            <person name="Himmel M."/>
            <person name="Loewe T."/>
            <person name="Stradal T."/>
            <person name="Rottner K."/>
            <person name="Fuerst D.O."/>
            <person name="van der Ven P.F.M."/>
        </authorList>
    </citation>
    <scope>NUCLEOTIDE SEQUENCE [MRNA] (ISOFORM B)</scope>
    <scope>FUNCTION</scope>
    <scope>SUBCELLULAR LOCATION</scope>
    <scope>INTERACTION WITH F-ACTIN</scope>
    <source>
        <tissue>Skeletal muscle</tissue>
    </source>
</reference>
<reference key="2">
    <citation type="journal article" date="2006" name="Exp. Cell Res.">
        <title>Unusual splicing events result in distinct Xin isoforms that associate differentially with filamin c and Mena/VASP.</title>
        <authorList>
            <person name="van der Ven P.F.M."/>
            <person name="Ehler E."/>
            <person name="Vakeel P."/>
            <person name="Eulitz S."/>
            <person name="Schenk J.A."/>
            <person name="Milting H."/>
            <person name="Micheel B."/>
            <person name="Fuerst D.O."/>
        </authorList>
    </citation>
    <scope>NUCLEOTIDE SEQUENCE [MRNA] (ISOFORM A)</scope>
    <scope>ALTERNATIVE SPLICING (ISOFORMS B AND C)</scope>
    <scope>TISSUE SPECIFICITY (ISOFORMS A; B AND C)</scope>
    <scope>INTERACTION WITH FLNC AND VASP</scope>
    <source>
        <tissue>Skeletal muscle</tissue>
    </source>
</reference>
<reference key="3">
    <citation type="submission" date="2003-08" db="EMBL/GenBank/DDBJ databases">
        <title>A novel human gene, hXin, specifically expressed in human heart and skeletal muscle.</title>
        <authorList>
            <person name="Luo J."/>
            <person name="Liu M."/>
            <person name="Wu X."/>
        </authorList>
    </citation>
    <scope>NUCLEOTIDE SEQUENCE [MRNA] (ISOFORM A)</scope>
</reference>
<reference key="4">
    <citation type="journal article" date="2004" name="Nat. Genet.">
        <title>Complete sequencing and characterization of 21,243 full-length human cDNAs.</title>
        <authorList>
            <person name="Ota T."/>
            <person name="Suzuki Y."/>
            <person name="Nishikawa T."/>
            <person name="Otsuki T."/>
            <person name="Sugiyama T."/>
            <person name="Irie R."/>
            <person name="Wakamatsu A."/>
            <person name="Hayashi K."/>
            <person name="Sato H."/>
            <person name="Nagai K."/>
            <person name="Kimura K."/>
            <person name="Makita H."/>
            <person name="Sekine M."/>
            <person name="Obayashi M."/>
            <person name="Nishi T."/>
            <person name="Shibahara T."/>
            <person name="Tanaka T."/>
            <person name="Ishii S."/>
            <person name="Yamamoto J."/>
            <person name="Saito K."/>
            <person name="Kawai Y."/>
            <person name="Isono Y."/>
            <person name="Nakamura Y."/>
            <person name="Nagahari K."/>
            <person name="Murakami K."/>
            <person name="Yasuda T."/>
            <person name="Iwayanagi T."/>
            <person name="Wagatsuma M."/>
            <person name="Shiratori A."/>
            <person name="Sudo H."/>
            <person name="Hosoiri T."/>
            <person name="Kaku Y."/>
            <person name="Kodaira H."/>
            <person name="Kondo H."/>
            <person name="Sugawara M."/>
            <person name="Takahashi M."/>
            <person name="Kanda K."/>
            <person name="Yokoi T."/>
            <person name="Furuya T."/>
            <person name="Kikkawa E."/>
            <person name="Omura Y."/>
            <person name="Abe K."/>
            <person name="Kamihara K."/>
            <person name="Katsuta N."/>
            <person name="Sato K."/>
            <person name="Tanikawa M."/>
            <person name="Yamazaki M."/>
            <person name="Ninomiya K."/>
            <person name="Ishibashi T."/>
            <person name="Yamashita H."/>
            <person name="Murakawa K."/>
            <person name="Fujimori K."/>
            <person name="Tanai H."/>
            <person name="Kimata M."/>
            <person name="Watanabe M."/>
            <person name="Hiraoka S."/>
            <person name="Chiba Y."/>
            <person name="Ishida S."/>
            <person name="Ono Y."/>
            <person name="Takiguchi S."/>
            <person name="Watanabe S."/>
            <person name="Yosida M."/>
            <person name="Hotuta T."/>
            <person name="Kusano J."/>
            <person name="Kanehori K."/>
            <person name="Takahashi-Fujii A."/>
            <person name="Hara H."/>
            <person name="Tanase T.-O."/>
            <person name="Nomura Y."/>
            <person name="Togiya S."/>
            <person name="Komai F."/>
            <person name="Hara R."/>
            <person name="Takeuchi K."/>
            <person name="Arita M."/>
            <person name="Imose N."/>
            <person name="Musashino K."/>
            <person name="Yuuki H."/>
            <person name="Oshima A."/>
            <person name="Sasaki N."/>
            <person name="Aotsuka S."/>
            <person name="Yoshikawa Y."/>
            <person name="Matsunawa H."/>
            <person name="Ichihara T."/>
            <person name="Shiohata N."/>
            <person name="Sano S."/>
            <person name="Moriya S."/>
            <person name="Momiyama H."/>
            <person name="Satoh N."/>
            <person name="Takami S."/>
            <person name="Terashima Y."/>
            <person name="Suzuki O."/>
            <person name="Nakagawa S."/>
            <person name="Senoh A."/>
            <person name="Mizoguchi H."/>
            <person name="Goto Y."/>
            <person name="Shimizu F."/>
            <person name="Wakebe H."/>
            <person name="Hishigaki H."/>
            <person name="Watanabe T."/>
            <person name="Sugiyama A."/>
            <person name="Takemoto M."/>
            <person name="Kawakami B."/>
            <person name="Yamazaki M."/>
            <person name="Watanabe K."/>
            <person name="Kumagai A."/>
            <person name="Itakura S."/>
            <person name="Fukuzumi Y."/>
            <person name="Fujimori Y."/>
            <person name="Komiyama M."/>
            <person name="Tashiro H."/>
            <person name="Tanigami A."/>
            <person name="Fujiwara T."/>
            <person name="Ono T."/>
            <person name="Yamada K."/>
            <person name="Fujii Y."/>
            <person name="Ozaki K."/>
            <person name="Hirao M."/>
            <person name="Ohmori Y."/>
            <person name="Kawabata A."/>
            <person name="Hikiji T."/>
            <person name="Kobatake N."/>
            <person name="Inagaki H."/>
            <person name="Ikema Y."/>
            <person name="Okamoto S."/>
            <person name="Okitani R."/>
            <person name="Kawakami T."/>
            <person name="Noguchi S."/>
            <person name="Itoh T."/>
            <person name="Shigeta K."/>
            <person name="Senba T."/>
            <person name="Matsumura K."/>
            <person name="Nakajima Y."/>
            <person name="Mizuno T."/>
            <person name="Morinaga M."/>
            <person name="Sasaki M."/>
            <person name="Togashi T."/>
            <person name="Oyama M."/>
            <person name="Hata H."/>
            <person name="Watanabe M."/>
            <person name="Komatsu T."/>
            <person name="Mizushima-Sugano J."/>
            <person name="Satoh T."/>
            <person name="Shirai Y."/>
            <person name="Takahashi Y."/>
            <person name="Nakagawa K."/>
            <person name="Okumura K."/>
            <person name="Nagase T."/>
            <person name="Nomura N."/>
            <person name="Kikuchi H."/>
            <person name="Masuho Y."/>
            <person name="Yamashita R."/>
            <person name="Nakai K."/>
            <person name="Yada T."/>
            <person name="Nakamura Y."/>
            <person name="Ohara O."/>
            <person name="Isogai T."/>
            <person name="Sugano S."/>
        </authorList>
    </citation>
    <scope>NUCLEOTIDE SEQUENCE [LARGE SCALE MRNA] (ISOFORM C)</scope>
    <scope>NUCLEOTIDE SEQUENCE [LARGE SCALE MRNA] OF 444-1843 (ISOFORM A)</scope>
    <source>
        <tissue>Heart</tissue>
        <tissue>Tongue</tissue>
        <tissue>Trachea</tissue>
    </source>
</reference>
<reference key="5">
    <citation type="journal article" date="2007" name="BMC Genomics">
        <title>The full-ORF clone resource of the German cDNA consortium.</title>
        <authorList>
            <person name="Bechtel S."/>
            <person name="Rosenfelder H."/>
            <person name="Duda A."/>
            <person name="Schmidt C.P."/>
            <person name="Ernst U."/>
            <person name="Wellenreuther R."/>
            <person name="Mehrle A."/>
            <person name="Schuster C."/>
            <person name="Bahr A."/>
            <person name="Bloecker H."/>
            <person name="Heubner D."/>
            <person name="Hoerlein A."/>
            <person name="Michel G."/>
            <person name="Wedler H."/>
            <person name="Koehrer K."/>
            <person name="Ottenwaelder B."/>
            <person name="Poustka A."/>
            <person name="Wiemann S."/>
            <person name="Schupp I."/>
        </authorList>
    </citation>
    <scope>NUCLEOTIDE SEQUENCE [LARGE SCALE MRNA] (ISOFORM B)</scope>
    <scope>NUCLEOTIDE SEQUENCE [LARGE SCALE MRNA] OF 570-1623 (ISOFORM A)</scope>
    <scope>VARIANT ARG-346</scope>
    <source>
        <tissue>Liver</tissue>
        <tissue>Skeletal muscle</tissue>
    </source>
</reference>
<reference key="6">
    <citation type="journal article" date="2004" name="Genome Res.">
        <title>The status, quality, and expansion of the NIH full-length cDNA project: the Mammalian Gene Collection (MGC).</title>
        <authorList>
            <consortium name="The MGC Project Team"/>
        </authorList>
    </citation>
    <scope>NUCLEOTIDE SEQUENCE [LARGE SCALE MRNA] (ISOFORM C)</scope>
    <scope>VARIANT ARG-1604</scope>
</reference>
<reference key="7">
    <citation type="submission" date="2000-01" db="EMBL/GenBank/DDBJ databases">
        <title>Study of a muscle specific transcript.</title>
        <authorList>
            <person name="Trevisan S."/>
            <person name="Lanfranchi G."/>
        </authorList>
    </citation>
    <scope>NUCLEOTIDE SEQUENCE [MRNA] OF 1554-1843</scope>
</reference>
<reference key="8">
    <citation type="journal article" date="2013" name="J. Proteome Res.">
        <title>Toward a comprehensive characterization of a human cancer cell phosphoproteome.</title>
        <authorList>
            <person name="Zhou H."/>
            <person name="Di Palma S."/>
            <person name="Preisinger C."/>
            <person name="Peng M."/>
            <person name="Polat A.N."/>
            <person name="Heck A.J."/>
            <person name="Mohammed S."/>
        </authorList>
    </citation>
    <scope>PHOSPHORYLATION [LARGE SCALE ANALYSIS] AT SER-295</scope>
    <scope>IDENTIFICATION BY MASS SPECTROMETRY [LARGE SCALE ANALYSIS]</scope>
    <source>
        <tissue>Erythroleukemia</tissue>
    </source>
</reference>
<reference key="9">
    <citation type="journal article" date="2013" name="Mol. Biol. Cell">
        <title>Identification of Xin-repeat proteins as novel ligands of the SH3 domains of nebulin and nebulette and analysis of their interaction during myofibril formation and remodeling.</title>
        <authorList>
            <person name="Eulitz S."/>
            <person name="Sauer F."/>
            <person name="Pelissier M.C."/>
            <person name="Boisguerin P."/>
            <person name="Molt S."/>
            <person name="Schuld J."/>
            <person name="Orfanos Z."/>
            <person name="Kley R.A."/>
            <person name="Volkmer R."/>
            <person name="Wilmanns M."/>
            <person name="Kirfel G."/>
            <person name="van der Ven P.F."/>
            <person name="Fuerst D.O."/>
        </authorList>
    </citation>
    <scope>TISSUE SPECIFICITY</scope>
</reference>
<reference key="10">
    <citation type="journal article" date="2006" name="Science">
        <title>The consensus coding sequences of human breast and colorectal cancers.</title>
        <authorList>
            <person name="Sjoeblom T."/>
            <person name="Jones S."/>
            <person name="Wood L.D."/>
            <person name="Parsons D.W."/>
            <person name="Lin J."/>
            <person name="Barber T.D."/>
            <person name="Mandelker D."/>
            <person name="Leary R.J."/>
            <person name="Ptak J."/>
            <person name="Silliman N."/>
            <person name="Szabo S."/>
            <person name="Buckhaults P."/>
            <person name="Farrell C."/>
            <person name="Meeh P."/>
            <person name="Markowitz S.D."/>
            <person name="Willis J."/>
            <person name="Dawson D."/>
            <person name="Willson J.K.V."/>
            <person name="Gazdar A.F."/>
            <person name="Hartigan J."/>
            <person name="Wu L."/>
            <person name="Liu C."/>
            <person name="Parmigiani G."/>
            <person name="Park B.H."/>
            <person name="Bachman K.E."/>
            <person name="Papadopoulos N."/>
            <person name="Vogelstein B."/>
            <person name="Kinzler K.W."/>
            <person name="Velculescu V.E."/>
        </authorList>
    </citation>
    <scope>VARIANTS [LARGE SCALE ANALYSIS] HIS-929 AND LYS-1634</scope>
</reference>
<accession>Q702N8</accession>
<accession>A0JP25</accession>
<accession>A4QPE2</accession>
<accession>Q68DF2</accession>
<accession>Q6ZTR3</accession>
<accession>Q702N9</accession>
<accession>Q8IVN7</accession>
<accession>Q8N1N3</accession>
<accession>Q8N904</accession>
<accession>Q8TCG7</accession>
<comment type="function">
    <text evidence="2 7">Protects actin filaments from depolymerization (PubMed:15454575). Required for correct cardiac intercalated disk ultrastructure via maintenance of cell-cell adhesion stability, and as a result maintains cardiac organ morphology, conductance and heart beat rhythm (By similarity). Required for development of normal skeletal muscle morphology and muscle fiber type composition (By similarity). Plays a role in regulating muscle satellite cell activation and survival, as a result promotes muscle fiber recovery from injury and fatigue (By similarity).</text>
</comment>
<comment type="subunit">
    <text evidence="2 7 9">Interacts (via N-terminus) with CTTN; the interaction promotes CTTN localization to intercalated disks in cardiomyocytes (By similarity). Interacts with CTNNB1 (By similarity). Interacts with FLNC and VASP (PubMed:16631741). Interacts with F-actin (PubMed:15454575).</text>
</comment>
<comment type="interaction">
    <interactant intactId="EBI-7851194">
        <id>Q702N8</id>
    </interactant>
    <interactant intactId="EBI-489954">
        <id>Q14315</id>
        <label>FLNC</label>
    </interactant>
    <organismsDiffer>false</organismsDiffer>
    <experiments>4</experiments>
</comment>
<comment type="interaction">
    <interactant intactId="EBI-7851194">
        <id>Q702N8</id>
    </interactant>
    <interactant intactId="EBI-748201">
        <id>P50552</id>
        <label>VASP</label>
    </interactant>
    <organismsDiffer>false</organismsDiffer>
    <experiments>5</experiments>
</comment>
<comment type="subcellular location">
    <subcellularLocation>
        <location evidence="7">Cell junction</location>
        <location evidence="7">Adherens junction</location>
    </subcellularLocation>
    <subcellularLocation>
        <location evidence="3">Cell junction</location>
        <location evidence="3">Desmosome</location>
    </subcellularLocation>
    <text evidence="7">Colocalizes with actin stress fibers.</text>
</comment>
<comment type="alternative products">
    <event type="alternative splicing"/>
    <isoform>
        <id>Q702N8-1</id>
        <name evidence="16">A</name>
        <sequence type="displayed"/>
    </isoform>
    <isoform>
        <id>Q702N8-2</id>
        <name evidence="16">B</name>
        <sequence type="described" ref="VSP_030844 VSP_030845"/>
    </isoform>
    <isoform>
        <id>Q702N8-3</id>
        <name evidence="16">C</name>
        <sequence type="described" ref="VSP_030843"/>
    </isoform>
</comment>
<comment type="tissue specificity">
    <text evidence="12">Expressed in skeletal muscle at areas of Z-disk disruption in a longitudinal pattern spanning one or more sarcomeres (at protein level).</text>
</comment>
<comment type="tissue specificity">
    <molecule>Isoform A</molecule>
    <text evidence="9">Expressed in the heart (at protein level).</text>
</comment>
<comment type="tissue specificity">
    <molecule>Isoform B</molecule>
    <text evidence="9">Expressed in the heart (at protein level).</text>
</comment>
<comment type="tissue specificity">
    <molecule>Isoform C</molecule>
    <text evidence="9">Expressed in the heart.</text>
</comment>
<comment type="domain">
    <text>Xin repeats bind F-actin.</text>
</comment>
<comment type="miscellaneous">
    <text>'Xin' means 'heart' in Chinese.</text>
</comment>
<comment type="similarity">
    <text evidence="5">Belongs to the Xin family.</text>
</comment>
<comment type="sequence caution" evidence="18">
    <conflict type="erroneous initiation">
        <sequence resource="EMBL-CDS" id="BAC86519"/>
    </conflict>
</comment>
<comment type="sequence caution" evidence="18">
    <conflict type="frameshift">
        <sequence resource="EMBL-CDS" id="CAC81057"/>
    </conflict>
</comment>
<comment type="sequence caution" evidence="18">
    <conflict type="erroneous initiation">
        <sequence resource="EMBL-CDS" id="CAD28459"/>
    </conflict>
</comment>
<dbReference type="EMBL" id="AJ626899">
    <property type="protein sequence ID" value="CAF25191.1"/>
    <property type="molecule type" value="mRNA"/>
</dbReference>
<dbReference type="EMBL" id="AJ626900">
    <property type="protein sequence ID" value="CAF25192.1"/>
    <property type="molecule type" value="mRNA"/>
</dbReference>
<dbReference type="EMBL" id="AY375160">
    <property type="protein sequence ID" value="AAQ64003.1"/>
    <property type="molecule type" value="mRNA"/>
</dbReference>
<dbReference type="EMBL" id="AK095941">
    <property type="protein sequence ID" value="BAC04655.1"/>
    <property type="molecule type" value="mRNA"/>
</dbReference>
<dbReference type="EMBL" id="AK096421">
    <property type="protein sequence ID" value="BAC04783.1"/>
    <property type="molecule type" value="mRNA"/>
</dbReference>
<dbReference type="EMBL" id="AK126299">
    <property type="protein sequence ID" value="BAC86519.1"/>
    <property type="status" value="ALT_INIT"/>
    <property type="molecule type" value="mRNA"/>
</dbReference>
<dbReference type="EMBL" id="AL713648">
    <property type="protein sequence ID" value="CAD28459.1"/>
    <property type="status" value="ALT_INIT"/>
    <property type="molecule type" value="mRNA"/>
</dbReference>
<dbReference type="EMBL" id="CR749430">
    <property type="protein sequence ID" value="CAH18268.1"/>
    <property type="molecule type" value="mRNA"/>
</dbReference>
<dbReference type="EMBL" id="BC127119">
    <property type="protein sequence ID" value="AAI27120.1"/>
    <property type="molecule type" value="mRNA"/>
</dbReference>
<dbReference type="EMBL" id="BC139782">
    <property type="protein sequence ID" value="AAI39783.1"/>
    <property type="molecule type" value="mRNA"/>
</dbReference>
<dbReference type="EMBL" id="AJ271461">
    <property type="protein sequence ID" value="CAC81057.1"/>
    <property type="status" value="ALT_FRAME"/>
    <property type="molecule type" value="mRNA"/>
</dbReference>
<dbReference type="CCDS" id="CCDS2683.1">
    <molecule id="Q702N8-1"/>
</dbReference>
<dbReference type="CCDS" id="CCDS56245.1">
    <molecule id="Q702N8-2"/>
</dbReference>
<dbReference type="CCDS" id="CCDS87065.1">
    <molecule id="Q702N8-3"/>
</dbReference>
<dbReference type="RefSeq" id="NP_001185550.1">
    <molecule id="Q702N8-2"/>
    <property type="nucleotide sequence ID" value="NM_001198621.4"/>
</dbReference>
<dbReference type="RefSeq" id="NP_001338306.1">
    <molecule id="Q702N8-3"/>
    <property type="nucleotide sequence ID" value="NM_001351377.2"/>
</dbReference>
<dbReference type="RefSeq" id="NP_919269.2">
    <molecule id="Q702N8-1"/>
    <property type="nucleotide sequence ID" value="NM_194293.2"/>
</dbReference>
<dbReference type="RefSeq" id="XP_005264966.1">
    <molecule id="Q702N8-1"/>
    <property type="nucleotide sequence ID" value="XM_005264909.4"/>
</dbReference>
<dbReference type="RefSeq" id="XP_047303544.1">
    <molecule id="Q702N8-2"/>
    <property type="nucleotide sequence ID" value="XM_047447588.1"/>
</dbReference>
<dbReference type="SMR" id="Q702N8"/>
<dbReference type="BioGRID" id="127921">
    <property type="interactions" value="23"/>
</dbReference>
<dbReference type="ELM" id="Q702N8"/>
<dbReference type="FunCoup" id="Q702N8">
    <property type="interactions" value="21"/>
</dbReference>
<dbReference type="IntAct" id="Q702N8">
    <property type="interactions" value="9"/>
</dbReference>
<dbReference type="MINT" id="Q702N8"/>
<dbReference type="STRING" id="9606.ENSP00000343140"/>
<dbReference type="GlyCosmos" id="Q702N8">
    <property type="glycosylation" value="1 site, 1 glycan"/>
</dbReference>
<dbReference type="GlyGen" id="Q702N8">
    <property type="glycosylation" value="6 sites, 1 N-linked glycan (1 site), 1 O-linked glycan (2 sites)"/>
</dbReference>
<dbReference type="iPTMnet" id="Q702N8"/>
<dbReference type="PhosphoSitePlus" id="Q702N8"/>
<dbReference type="BioMuta" id="XIRP1"/>
<dbReference type="DMDM" id="74712579"/>
<dbReference type="jPOST" id="Q702N8"/>
<dbReference type="MassIVE" id="Q702N8"/>
<dbReference type="PaxDb" id="9606-ENSP00000343140"/>
<dbReference type="PeptideAtlas" id="Q702N8"/>
<dbReference type="ProteomicsDB" id="68504">
    <molecule id="Q702N8-1"/>
</dbReference>
<dbReference type="ProteomicsDB" id="68505">
    <molecule id="Q702N8-2"/>
</dbReference>
<dbReference type="ProteomicsDB" id="68506">
    <molecule id="Q702N8-3"/>
</dbReference>
<dbReference type="Antibodypedia" id="12167">
    <property type="antibodies" value="81 antibodies from 21 providers"/>
</dbReference>
<dbReference type="DNASU" id="165904"/>
<dbReference type="Ensembl" id="ENST00000340369.4">
    <molecule id="Q702N8-1"/>
    <property type="protein sequence ID" value="ENSP00000343140.3"/>
    <property type="gene ID" value="ENSG00000168334.9"/>
</dbReference>
<dbReference type="Ensembl" id="ENST00000396251.1">
    <molecule id="Q702N8-2"/>
    <property type="protein sequence ID" value="ENSP00000379550.1"/>
    <property type="gene ID" value="ENSG00000168334.9"/>
</dbReference>
<dbReference type="Ensembl" id="ENST00000421646.1">
    <molecule id="Q702N8-3"/>
    <property type="protein sequence ID" value="ENSP00000391645.1"/>
    <property type="gene ID" value="ENSG00000168334.9"/>
</dbReference>
<dbReference type="GeneID" id="165904"/>
<dbReference type="KEGG" id="hsa:165904"/>
<dbReference type="MANE-Select" id="ENST00000340369.4">
    <property type="protein sequence ID" value="ENSP00000343140.3"/>
    <property type="RefSeq nucleotide sequence ID" value="NM_194293.4"/>
    <property type="RefSeq protein sequence ID" value="NP_919269.2"/>
</dbReference>
<dbReference type="UCSC" id="uc003cji.4">
    <molecule id="Q702N8-1"/>
    <property type="organism name" value="human"/>
</dbReference>
<dbReference type="AGR" id="HGNC:14301"/>
<dbReference type="CTD" id="165904"/>
<dbReference type="DisGeNET" id="165904"/>
<dbReference type="GeneCards" id="XIRP1"/>
<dbReference type="HGNC" id="HGNC:14301">
    <property type="gene designation" value="XIRP1"/>
</dbReference>
<dbReference type="HPA" id="ENSG00000168334">
    <property type="expression patterns" value="Group enriched (heart muscle, skeletal muscle)"/>
</dbReference>
<dbReference type="MalaCards" id="XIRP1"/>
<dbReference type="MIM" id="609777">
    <property type="type" value="gene"/>
</dbReference>
<dbReference type="neXtProt" id="NX_Q702N8"/>
<dbReference type="OpenTargets" id="ENSG00000168334"/>
<dbReference type="PharmGKB" id="PA162409336"/>
<dbReference type="VEuPathDB" id="HostDB:ENSG00000168334"/>
<dbReference type="eggNOG" id="ENOG502QTAC">
    <property type="taxonomic scope" value="Eukaryota"/>
</dbReference>
<dbReference type="GeneTree" id="ENSGT00530000063779"/>
<dbReference type="HOGENOM" id="CLU_280589_0_0_1"/>
<dbReference type="InParanoid" id="Q702N8"/>
<dbReference type="OMA" id="DGIYTAH"/>
<dbReference type="OrthoDB" id="6129702at2759"/>
<dbReference type="PAN-GO" id="Q702N8">
    <property type="GO annotations" value="4 GO annotations based on evolutionary models"/>
</dbReference>
<dbReference type="PhylomeDB" id="Q702N8"/>
<dbReference type="TreeFam" id="TF330745"/>
<dbReference type="PathwayCommons" id="Q702N8"/>
<dbReference type="SignaLink" id="Q702N8"/>
<dbReference type="BioGRID-ORCS" id="165904">
    <property type="hits" value="5 hits in 1143 CRISPR screens"/>
</dbReference>
<dbReference type="CD-CODE" id="DEE660B4">
    <property type="entry name" value="Stress granule"/>
</dbReference>
<dbReference type="ChiTaRS" id="XIRP1">
    <property type="organism name" value="human"/>
</dbReference>
<dbReference type="GenomeRNAi" id="165904"/>
<dbReference type="Pharos" id="Q702N8">
    <property type="development level" value="Tbio"/>
</dbReference>
<dbReference type="PRO" id="PR:Q702N8"/>
<dbReference type="Proteomes" id="UP000005640">
    <property type="component" value="Chromosome 3"/>
</dbReference>
<dbReference type="RNAct" id="Q702N8">
    <property type="molecule type" value="protein"/>
</dbReference>
<dbReference type="Bgee" id="ENSG00000168334">
    <property type="expression patterns" value="Expressed in left ventricle myocardium and 119 other cell types or tissues"/>
</dbReference>
<dbReference type="GO" id="GO:0005912">
    <property type="term" value="C:adherens junction"/>
    <property type="evidence" value="ECO:0007669"/>
    <property type="project" value="UniProtKB-SubCell"/>
</dbReference>
<dbReference type="GO" id="GO:0030057">
    <property type="term" value="C:desmosome"/>
    <property type="evidence" value="ECO:0007669"/>
    <property type="project" value="UniProtKB-SubCell"/>
</dbReference>
<dbReference type="GO" id="GO:0051015">
    <property type="term" value="F:actin filament binding"/>
    <property type="evidence" value="ECO:0000315"/>
    <property type="project" value="UniProtKB"/>
</dbReference>
<dbReference type="GO" id="GO:0003723">
    <property type="term" value="F:RNA binding"/>
    <property type="evidence" value="ECO:0007005"/>
    <property type="project" value="UniProtKB"/>
</dbReference>
<dbReference type="GO" id="GO:0007015">
    <property type="term" value="P:actin filament organization"/>
    <property type="evidence" value="ECO:0000315"/>
    <property type="project" value="UniProtKB"/>
</dbReference>
<dbReference type="GO" id="GO:0014835">
    <property type="term" value="P:myoblast differentiation involved in skeletal muscle regeneration"/>
    <property type="evidence" value="ECO:0000250"/>
    <property type="project" value="UniProtKB"/>
</dbReference>
<dbReference type="GO" id="GO:0032091">
    <property type="term" value="P:negative regulation of protein binding"/>
    <property type="evidence" value="ECO:0000315"/>
    <property type="project" value="UniProtKB"/>
</dbReference>
<dbReference type="GO" id="GO:0008104">
    <property type="term" value="P:protein localization"/>
    <property type="evidence" value="ECO:0000250"/>
    <property type="project" value="UniProtKB"/>
</dbReference>
<dbReference type="GO" id="GO:0014901">
    <property type="term" value="P:satellite cell activation involved in skeletal muscle regeneration"/>
    <property type="evidence" value="ECO:0000250"/>
    <property type="project" value="UniProtKB"/>
</dbReference>
<dbReference type="InterPro" id="IPR012510">
    <property type="entry name" value="Actin-binding_Xin_repeat"/>
</dbReference>
<dbReference type="InterPro" id="IPR030072">
    <property type="entry name" value="XIRP1/XIRP2"/>
</dbReference>
<dbReference type="PANTHER" id="PTHR22591">
    <property type="entry name" value="XIN"/>
    <property type="match status" value="1"/>
</dbReference>
<dbReference type="PANTHER" id="PTHR22591:SF2">
    <property type="entry name" value="XIN ACTIN-BINDING REPEAT-CONTAINING PROTEIN 1"/>
    <property type="match status" value="1"/>
</dbReference>
<dbReference type="Pfam" id="PF08043">
    <property type="entry name" value="Xin"/>
    <property type="match status" value="9"/>
</dbReference>
<dbReference type="PROSITE" id="PS51389">
    <property type="entry name" value="XIN"/>
    <property type="match status" value="17"/>
</dbReference>
<evidence type="ECO:0000250" key="1"/>
<evidence type="ECO:0000250" key="2">
    <source>
        <dbReference type="UniProtKB" id="O70373"/>
    </source>
</evidence>
<evidence type="ECO:0000250" key="3">
    <source>
        <dbReference type="UniProtKB" id="Q5PZ43"/>
    </source>
</evidence>
<evidence type="ECO:0000255" key="4"/>
<evidence type="ECO:0000255" key="5">
    <source>
        <dbReference type="PROSITE-ProRule" id="PRU00721"/>
    </source>
</evidence>
<evidence type="ECO:0000256" key="6">
    <source>
        <dbReference type="SAM" id="MobiDB-lite"/>
    </source>
</evidence>
<evidence type="ECO:0000269" key="7">
    <source>
    </source>
</evidence>
<evidence type="ECO:0000269" key="8">
    <source>
    </source>
</evidence>
<evidence type="ECO:0000269" key="9">
    <source>
    </source>
</evidence>
<evidence type="ECO:0000269" key="10">
    <source>
    </source>
</evidence>
<evidence type="ECO:0000269" key="11">
    <source>
    </source>
</evidence>
<evidence type="ECO:0000269" key="12">
    <source>
    </source>
</evidence>
<evidence type="ECO:0000303" key="13">
    <source>
    </source>
</evidence>
<evidence type="ECO:0000303" key="14">
    <source>
    </source>
</evidence>
<evidence type="ECO:0000303" key="15">
    <source>
    </source>
</evidence>
<evidence type="ECO:0000303" key="16">
    <source>
    </source>
</evidence>
<evidence type="ECO:0000303" key="17">
    <source>
    </source>
</evidence>
<evidence type="ECO:0000305" key="18"/>
<evidence type="ECO:0000312" key="19">
    <source>
        <dbReference type="HGNC" id="HGNC:14301"/>
    </source>
</evidence>
<evidence type="ECO:0007744" key="20">
    <source>
    </source>
</evidence>
<protein>
    <recommendedName>
        <fullName>Xin actin-binding repeat-containing protein 1</fullName>
    </recommendedName>
    <alternativeName>
        <fullName>Cardiomyopathy-associated protein 1</fullName>
    </alternativeName>
</protein>
<sequence>MADTQTQVAPTPTMRMATAEDLPLPPPPALEDLPLPPPKESFSKFHQQRQASELRRLYRHIHPELRKNLAEAVAEDLAEVLGSEEPTEGDVQCMRWIFENWRLDAIGEHERPAAKEPVLCGDVQATSRKFEEGSFANSTDQEPTRPQPGGGDVRAARWLFETKPLDELTGQAKELEATVREPAASGDVQGTRMLFETRPLDRLGSRPSLQEQSPLELRSEIQELKGDVKKTVKLFQTEPLCAIQDAEGAIHEVKAACREEIQSNAVRSARWLFETRPLDAINQDPSQVRVIRGISLEEGARPDVSATRWIFETQPLDAIREILVDEKDFQPSPDLIPPGPDVQQQQHLFETRALDTLKGDEEAGAEAPPKEEVVPGDVRSTLWLFETKPLDAFRDKVQVGHLQRVDPQDGEGHLSSDSSSALPFSQSAPQRDELKGDVKTFKNLFETLPLDSIGQGEVLAHGSPSREEGTDSAGQAQGIGSPVYAMQDSKGRLHALTSVSREQIVGGDVQGYRWMFETQPLDQLGRSPSTIDVVRGITRQEVVAGDVGTARWLFETQPLEMIHQREQQERQKEEGKSQGDPQPEAPPKGDVQTIRWLFETCPMSELAEKQGSEVTDPTAKAEAQSCTWMFKPQPVDRPVGSREQHLQVSQVPAGERQTDRHVFETEPLQASGRPCGRRPVRYCSRVEIPSGQVSRQKEVFQALEAGKKEEQEPRVIAGSIPAGSVHKFTWLFENCPMGSLAAESIQGGNLLEEQPMSPSGNRMQESQETAAEGTLRTLHATPGILHHGGILMEARGPGELCLAKYVLSGTGQGHPYIRKEELVSGELPRIICQVLRRPDVDQQGLLVQEDPTGQLQLKPLRLPTPGSSGNIEDMDPELQQLLACGLGTSVARTGLVMQETEQGLVALTAYSLQPRLTSKASERSSVQLLASCIDKGDLSGLHSLRWEPPADPSPVPASEGAQSLHPTESIIHVPPLDPSMGMGHLRASGATPCPPQAIGKAVPLAGEAAAPAQLQNTEKQEDSHSGQKGMAVLGKSEGATTTPPGPGAPDLLAAMQSLRMATAEAQSLHQQVLNKHKQGPTPTATSNPIQDGLRKAGATQSNIRPGGGSDPRIPAAPRKVSREEQALPRGLPGGWVTIQDGIYTAHPVRTFDPPGGVQLSQREPQSRHRETALSVQAPRPLQGGPGQSTGPGREEPGGCTQMAWGPPGKAMAEVCPGGLQAAETTLKTAPLGRHILASGPQAAGASPHPHNAFVPPPPTLPAAVTGPDFPAGAHRAEDSIQQASEPLKDPLLHSHSSPAGQRTPGGSQTKTPKLDPTMPPKKKPQLPPKPAHLTQSHPPQRLPKPLPLSPSFSSEVGQREHQRGERDTAIPQPAKVPTTVDQGHIPLARCPSGHSQPSLQHGLSTTAPRPTKNQATGSNAQSSEPPKLNALNHDPTSPQWGPGPSGEQPMEGSHQGAPESPDSLQRNQKELQGLLNQVQALEKEAASSVDVQALRRLFEAVPQLGGAAPQAPAAHQKPEASVEQAFGELTRVSTEVAQLKEQTLARLLDIEEAVHKALSSMSSLQPEASARGHFQGPPKDHSAHKISVTVSSSARPSGSGQEVGGQTAVKNQAKVECHTEAQSQVKIRNHTEARGHTASTAPSTRRQETSREYLCPPRVLPSSRDSPSSPTFISIQSATRKPLETPSFKGNPDVSVKSTQLAQDIGQALLHQKGVQDKTGKKDITQCSVQPEPAPPSASPLPRGWQKSVLELQTGPGSSQHYGAMRTVTEQYEEVDQFGNTVLMSSTTVTEQAEPPRNPGSHLGLHASPLLRQFLHSPAGFSSDLTEAETVQVSCSYSQPAAQ</sequence>
<keyword id="KW-0009">Actin-binding</keyword>
<keyword id="KW-0025">Alternative splicing</keyword>
<keyword id="KW-0965">Cell junction</keyword>
<keyword id="KW-0175">Coiled coil</keyword>
<keyword id="KW-0597">Phosphoprotein</keyword>
<keyword id="KW-1267">Proteomics identification</keyword>
<keyword id="KW-1185">Reference proteome</keyword>
<keyword id="KW-0677">Repeat</keyword>
<name>XIRP1_HUMAN</name>
<proteinExistence type="evidence at protein level"/>
<gene>
    <name evidence="19" type="primary">XIRP1</name>
    <name evidence="19" type="synonym">CMYA1</name>
    <name evidence="14" type="synonym">XIN</name>
</gene>